<dbReference type="EC" id="4.1.99.12" evidence="1"/>
<dbReference type="EMBL" id="AE000666">
    <property type="protein sequence ID" value="AAB85974.1"/>
    <property type="molecule type" value="Genomic_DNA"/>
</dbReference>
<dbReference type="PIR" id="G69066">
    <property type="entry name" value="G69066"/>
</dbReference>
<dbReference type="SMR" id="O27543"/>
<dbReference type="FunCoup" id="O27543">
    <property type="interactions" value="99"/>
</dbReference>
<dbReference type="STRING" id="187420.MTH_1499"/>
<dbReference type="PaxDb" id="187420-MTH_1499"/>
<dbReference type="EnsemblBacteria" id="AAB85974">
    <property type="protein sequence ID" value="AAB85974"/>
    <property type="gene ID" value="MTH_1499"/>
</dbReference>
<dbReference type="KEGG" id="mth:MTH_1499"/>
<dbReference type="PATRIC" id="fig|187420.15.peg.1462"/>
<dbReference type="HOGENOM" id="CLU_020273_3_2_2"/>
<dbReference type="InParanoid" id="O27543"/>
<dbReference type="UniPathway" id="UPA00275">
    <property type="reaction ID" value="UER00399"/>
</dbReference>
<dbReference type="Proteomes" id="UP000005223">
    <property type="component" value="Chromosome"/>
</dbReference>
<dbReference type="GO" id="GO:0005829">
    <property type="term" value="C:cytosol"/>
    <property type="evidence" value="ECO:0007669"/>
    <property type="project" value="TreeGrafter"/>
</dbReference>
<dbReference type="GO" id="GO:0008686">
    <property type="term" value="F:3,4-dihydroxy-2-butanone-4-phosphate synthase activity"/>
    <property type="evidence" value="ECO:0007669"/>
    <property type="project" value="UniProtKB-UniRule"/>
</dbReference>
<dbReference type="GO" id="GO:0000287">
    <property type="term" value="F:magnesium ion binding"/>
    <property type="evidence" value="ECO:0007669"/>
    <property type="project" value="UniProtKB-UniRule"/>
</dbReference>
<dbReference type="GO" id="GO:0030145">
    <property type="term" value="F:manganese ion binding"/>
    <property type="evidence" value="ECO:0007669"/>
    <property type="project" value="UniProtKB-UniRule"/>
</dbReference>
<dbReference type="GO" id="GO:0009231">
    <property type="term" value="P:riboflavin biosynthetic process"/>
    <property type="evidence" value="ECO:0007669"/>
    <property type="project" value="UniProtKB-UniRule"/>
</dbReference>
<dbReference type="Gene3D" id="3.90.870.10">
    <property type="entry name" value="DHBP synthase"/>
    <property type="match status" value="1"/>
</dbReference>
<dbReference type="HAMAP" id="MF_00180">
    <property type="entry name" value="RibB"/>
    <property type="match status" value="1"/>
</dbReference>
<dbReference type="InterPro" id="IPR017945">
    <property type="entry name" value="DHBP_synth_RibB-like_a/b_dom"/>
</dbReference>
<dbReference type="InterPro" id="IPR000422">
    <property type="entry name" value="DHBP_synthase_RibB"/>
</dbReference>
<dbReference type="NCBIfam" id="TIGR00506">
    <property type="entry name" value="ribB"/>
    <property type="match status" value="1"/>
</dbReference>
<dbReference type="PANTHER" id="PTHR21327:SF46">
    <property type="entry name" value="3,4-DIHYDROXY-2-BUTANONE 4-PHOSPHATE SYNTHASE"/>
    <property type="match status" value="1"/>
</dbReference>
<dbReference type="PANTHER" id="PTHR21327">
    <property type="entry name" value="GTP CYCLOHYDROLASE II-RELATED"/>
    <property type="match status" value="1"/>
</dbReference>
<dbReference type="Pfam" id="PF00926">
    <property type="entry name" value="DHBP_synthase"/>
    <property type="match status" value="1"/>
</dbReference>
<dbReference type="SUPFAM" id="SSF55821">
    <property type="entry name" value="YrdC/RibB"/>
    <property type="match status" value="1"/>
</dbReference>
<feature type="chain" id="PRO_0000151827" description="3,4-dihydroxy-2-butanone 4-phosphate synthase">
    <location>
        <begin position="1"/>
        <end position="229"/>
    </location>
</feature>
<feature type="binding site" evidence="1">
    <location>
        <begin position="28"/>
        <end position="29"/>
    </location>
    <ligand>
        <name>D-ribulose 5-phosphate</name>
        <dbReference type="ChEBI" id="CHEBI:58121"/>
    </ligand>
</feature>
<feature type="binding site" evidence="1">
    <location>
        <position position="29"/>
    </location>
    <ligand>
        <name>Mg(2+)</name>
        <dbReference type="ChEBI" id="CHEBI:18420"/>
        <label>1</label>
    </ligand>
</feature>
<feature type="binding site" evidence="1">
    <location>
        <position position="29"/>
    </location>
    <ligand>
        <name>Mg(2+)</name>
        <dbReference type="ChEBI" id="CHEBI:18420"/>
        <label>2</label>
    </ligand>
</feature>
<feature type="binding site" evidence="1">
    <location>
        <position position="33"/>
    </location>
    <ligand>
        <name>D-ribulose 5-phosphate</name>
        <dbReference type="ChEBI" id="CHEBI:58121"/>
    </ligand>
</feature>
<feature type="binding site" evidence="1">
    <location>
        <begin position="164"/>
        <end position="168"/>
    </location>
    <ligand>
        <name>D-ribulose 5-phosphate</name>
        <dbReference type="ChEBI" id="CHEBI:58121"/>
    </ligand>
</feature>
<feature type="binding site" evidence="1">
    <location>
        <position position="167"/>
    </location>
    <ligand>
        <name>Mg(2+)</name>
        <dbReference type="ChEBI" id="CHEBI:18420"/>
        <label>2</label>
    </ligand>
</feature>
<feature type="binding site" evidence="1">
    <location>
        <position position="188"/>
    </location>
    <ligand>
        <name>D-ribulose 5-phosphate</name>
        <dbReference type="ChEBI" id="CHEBI:58121"/>
    </ligand>
</feature>
<feature type="site" description="Essential for catalytic activity" evidence="1">
    <location>
        <position position="150"/>
    </location>
</feature>
<feature type="site" description="Essential for catalytic activity" evidence="1">
    <location>
        <position position="188"/>
    </location>
</feature>
<accession>O27543</accession>
<proteinExistence type="inferred from homology"/>
<evidence type="ECO:0000255" key="1">
    <source>
        <dbReference type="HAMAP-Rule" id="MF_00180"/>
    </source>
</evidence>
<organism>
    <name type="scientific">Methanothermobacter thermautotrophicus (strain ATCC 29096 / DSM 1053 / JCM 10044 / NBRC 100330 / Delta H)</name>
    <name type="common">Methanobacterium thermoautotrophicum</name>
    <dbReference type="NCBI Taxonomy" id="187420"/>
    <lineage>
        <taxon>Archaea</taxon>
        <taxon>Methanobacteriati</taxon>
        <taxon>Methanobacteriota</taxon>
        <taxon>Methanomada group</taxon>
        <taxon>Methanobacteria</taxon>
        <taxon>Methanobacteriales</taxon>
        <taxon>Methanobacteriaceae</taxon>
        <taxon>Methanothermobacter</taxon>
    </lineage>
</organism>
<name>RIBB_METTH</name>
<comment type="function">
    <text evidence="1">Catalyzes the conversion of D-ribulose 5-phosphate to formate and 3,4-dihydroxy-2-butanone 4-phosphate.</text>
</comment>
<comment type="catalytic activity">
    <reaction evidence="1">
        <text>D-ribulose 5-phosphate = (2S)-2-hydroxy-3-oxobutyl phosphate + formate + H(+)</text>
        <dbReference type="Rhea" id="RHEA:18457"/>
        <dbReference type="ChEBI" id="CHEBI:15378"/>
        <dbReference type="ChEBI" id="CHEBI:15740"/>
        <dbReference type="ChEBI" id="CHEBI:58121"/>
        <dbReference type="ChEBI" id="CHEBI:58830"/>
        <dbReference type="EC" id="4.1.99.12"/>
    </reaction>
</comment>
<comment type="cofactor">
    <cofactor evidence="1">
        <name>Mg(2+)</name>
        <dbReference type="ChEBI" id="CHEBI:18420"/>
    </cofactor>
    <cofactor evidence="1">
        <name>Mn(2+)</name>
        <dbReference type="ChEBI" id="CHEBI:29035"/>
    </cofactor>
    <text evidence="1">Binds 2 divalent metal cations per subunit. Magnesium or manganese.</text>
</comment>
<comment type="pathway">
    <text evidence="1">Cofactor biosynthesis; riboflavin biosynthesis; 2-hydroxy-3-oxobutyl phosphate from D-ribulose 5-phosphate: step 1/1.</text>
</comment>
<comment type="subunit">
    <text evidence="1">Homodimer.</text>
</comment>
<comment type="similarity">
    <text evidence="1">Belongs to the DHBP synthase family.</text>
</comment>
<keyword id="KW-0456">Lyase</keyword>
<keyword id="KW-0460">Magnesium</keyword>
<keyword id="KW-0464">Manganese</keyword>
<keyword id="KW-0479">Metal-binding</keyword>
<keyword id="KW-1185">Reference proteome</keyword>
<keyword id="KW-0686">Riboflavin biosynthesis</keyword>
<reference key="1">
    <citation type="journal article" date="1997" name="J. Bacteriol.">
        <title>Complete genome sequence of Methanobacterium thermoautotrophicum deltaH: functional analysis and comparative genomics.</title>
        <authorList>
            <person name="Smith D.R."/>
            <person name="Doucette-Stamm L.A."/>
            <person name="Deloughery C."/>
            <person name="Lee H.-M."/>
            <person name="Dubois J."/>
            <person name="Aldredge T."/>
            <person name="Bashirzadeh R."/>
            <person name="Blakely D."/>
            <person name="Cook R."/>
            <person name="Gilbert K."/>
            <person name="Harrison D."/>
            <person name="Hoang L."/>
            <person name="Keagle P."/>
            <person name="Lumm W."/>
            <person name="Pothier B."/>
            <person name="Qiu D."/>
            <person name="Spadafora R."/>
            <person name="Vicare R."/>
            <person name="Wang Y."/>
            <person name="Wierzbowski J."/>
            <person name="Gibson R."/>
            <person name="Jiwani N."/>
            <person name="Caruso A."/>
            <person name="Bush D."/>
            <person name="Safer H."/>
            <person name="Patwell D."/>
            <person name="Prabhakar S."/>
            <person name="McDougall S."/>
            <person name="Shimer G."/>
            <person name="Goyal A."/>
            <person name="Pietrovski S."/>
            <person name="Church G.M."/>
            <person name="Daniels C.J."/>
            <person name="Mao J.-I."/>
            <person name="Rice P."/>
            <person name="Noelling J."/>
            <person name="Reeve J.N."/>
        </authorList>
    </citation>
    <scope>NUCLEOTIDE SEQUENCE [LARGE SCALE GENOMIC DNA]</scope>
    <source>
        <strain>ATCC 29096 / DSM 1053 / JCM 10044 / NBRC 100330 / Delta H</strain>
    </source>
</reference>
<protein>
    <recommendedName>
        <fullName evidence="1">3,4-dihydroxy-2-butanone 4-phosphate synthase</fullName>
        <shortName evidence="1">DHBP synthase</shortName>
        <ecNumber evidence="1">4.1.99.12</ecNumber>
    </recommendedName>
</protein>
<gene>
    <name evidence="1" type="primary">ribB</name>
    <name type="ordered locus">MTH_1499</name>
</gene>
<sequence length="229" mass="25638">MEIVIMIQEALKALRRGEIVLVFDADNRERETDMIVAAEKIKPEHIRIMRNDAGGLICVPVSWENSEKLGIPYMTDIMEEASGRYPVLGKLSPHDIPYDEKSAFSITVNHRKTFTGITDNDRALTIGELAGICRDDRHESFGDLFRSPGHVTLLRAADGHVLRRGGHTEMSIALMEMAGLTGVAVCCEMMDDRTGNSLSTEDAMKYAREHDLIFMSGAELIESYMEFRS</sequence>